<gene>
    <name type="primary">MT1</name>
</gene>
<feature type="chain" id="PRO_0000197403" description="Metallothionein-like protein type 2">
    <location>
        <begin position="1"/>
        <end position="79"/>
    </location>
</feature>
<evidence type="ECO:0000305" key="1"/>
<sequence length="79" mass="7836">MSSCCGGKCGCGSVCSCGSGCNGCGMAPDLSYMEGSTTETLVMGVAPQKSHMEASEMGVAAENGCKCGDNCTCNPCNCK</sequence>
<comment type="function">
    <text>Metallothioneins have a high content of cysteine residues that bind various heavy metals.</text>
</comment>
<comment type="similarity">
    <text evidence="1">Belongs to the metallothionein superfamily. Type 15 family.</text>
</comment>
<proteinExistence type="inferred from homology"/>
<keyword id="KW-0479">Metal-binding</keyword>
<keyword id="KW-0480">Metal-thiolate cluster</keyword>
<reference key="1">
    <citation type="journal article" date="1997" name="Physiol. Plantarum">
        <title>Up-regulation of two cDNA clones encoding metallothionein-like proteins in apple fruit during cool storage.</title>
        <authorList>
            <person name="Reid S.J."/>
            <person name="Ross G.S."/>
        </authorList>
    </citation>
    <scope>NUCLEOTIDE SEQUENCE [MRNA]</scope>
    <source>
        <tissue>Fruit cortical tissue</tissue>
    </source>
</reference>
<protein>
    <recommendedName>
        <fullName>Metallothionein-like protein type 2</fullName>
    </recommendedName>
</protein>
<organism>
    <name type="scientific">Malus domestica</name>
    <name type="common">Apple</name>
    <name type="synonym">Pyrus malus</name>
    <dbReference type="NCBI Taxonomy" id="3750"/>
    <lineage>
        <taxon>Eukaryota</taxon>
        <taxon>Viridiplantae</taxon>
        <taxon>Streptophyta</taxon>
        <taxon>Embryophyta</taxon>
        <taxon>Tracheophyta</taxon>
        <taxon>Spermatophyta</taxon>
        <taxon>Magnoliopsida</taxon>
        <taxon>eudicotyledons</taxon>
        <taxon>Gunneridae</taxon>
        <taxon>Pentapetalae</taxon>
        <taxon>rosids</taxon>
        <taxon>fabids</taxon>
        <taxon>Rosales</taxon>
        <taxon>Rosaceae</taxon>
        <taxon>Amygdaloideae</taxon>
        <taxon>Maleae</taxon>
        <taxon>Malus</taxon>
    </lineage>
</organism>
<accession>O24058</accession>
<name>MT2_MALDO</name>
<dbReference type="EMBL" id="U61973">
    <property type="protein sequence ID" value="AAC23697.1"/>
    <property type="molecule type" value="mRNA"/>
</dbReference>
<dbReference type="PIR" id="T17014">
    <property type="entry name" value="T17014"/>
</dbReference>
<dbReference type="GO" id="GO:0046872">
    <property type="term" value="F:metal ion binding"/>
    <property type="evidence" value="ECO:0007669"/>
    <property type="project" value="UniProtKB-KW"/>
</dbReference>
<dbReference type="InterPro" id="IPR000347">
    <property type="entry name" value="Metalthion_15p"/>
</dbReference>
<dbReference type="PANTHER" id="PTHR33543">
    <property type="entry name" value="METALLOTHIONEIN-LIKE PROTEIN 2A"/>
    <property type="match status" value="1"/>
</dbReference>
<dbReference type="PANTHER" id="PTHR33543:SF33">
    <property type="entry name" value="METALLOTHIONEIN-LIKE PROTEIN 2B"/>
    <property type="match status" value="1"/>
</dbReference>
<dbReference type="Pfam" id="PF01439">
    <property type="entry name" value="Metallothio_2"/>
    <property type="match status" value="1"/>
</dbReference>